<comment type="function">
    <text evidence="1">DNA ligase that catalyzes the formation of phosphodiester linkages between 5'-phosphoryl and 3'-hydroxyl groups in double-stranded DNA using NAD as a coenzyme and as the energy source for the reaction. It is essential for DNA replication and repair of damaged DNA.</text>
</comment>
<comment type="catalytic activity">
    <reaction evidence="1">
        <text>NAD(+) + (deoxyribonucleotide)n-3'-hydroxyl + 5'-phospho-(deoxyribonucleotide)m = (deoxyribonucleotide)n+m + AMP + beta-nicotinamide D-nucleotide.</text>
        <dbReference type="EC" id="6.5.1.2"/>
    </reaction>
</comment>
<comment type="cofactor">
    <cofactor evidence="1">
        <name>Mg(2+)</name>
        <dbReference type="ChEBI" id="CHEBI:18420"/>
    </cofactor>
    <cofactor evidence="1">
        <name>Mn(2+)</name>
        <dbReference type="ChEBI" id="CHEBI:29035"/>
    </cofactor>
</comment>
<comment type="similarity">
    <text evidence="1">Belongs to the NAD-dependent DNA ligase family. LigA subfamily.</text>
</comment>
<name>DNLJ_CLOBL</name>
<gene>
    <name evidence="1" type="primary">ligA</name>
    <name type="ordered locus">CLI_3441</name>
</gene>
<organism>
    <name type="scientific">Clostridium botulinum (strain Langeland / NCTC 10281 / Type F)</name>
    <dbReference type="NCBI Taxonomy" id="441772"/>
    <lineage>
        <taxon>Bacteria</taxon>
        <taxon>Bacillati</taxon>
        <taxon>Bacillota</taxon>
        <taxon>Clostridia</taxon>
        <taxon>Eubacteriales</taxon>
        <taxon>Clostridiaceae</taxon>
        <taxon>Clostridium</taxon>
    </lineage>
</organism>
<keyword id="KW-0227">DNA damage</keyword>
<keyword id="KW-0234">DNA repair</keyword>
<keyword id="KW-0235">DNA replication</keyword>
<keyword id="KW-0436">Ligase</keyword>
<keyword id="KW-0460">Magnesium</keyword>
<keyword id="KW-0464">Manganese</keyword>
<keyword id="KW-0479">Metal-binding</keyword>
<keyword id="KW-0520">NAD</keyword>
<keyword id="KW-0862">Zinc</keyword>
<accession>A7GIK6</accession>
<protein>
    <recommendedName>
        <fullName evidence="1">DNA ligase</fullName>
        <ecNumber evidence="1">6.5.1.2</ecNumber>
    </recommendedName>
    <alternativeName>
        <fullName evidence="1">Polydeoxyribonucleotide synthase [NAD(+)]</fullName>
    </alternativeName>
</protein>
<feature type="chain" id="PRO_0000313196" description="DNA ligase">
    <location>
        <begin position="1"/>
        <end position="664"/>
    </location>
</feature>
<feature type="domain" description="BRCT" evidence="1">
    <location>
        <begin position="587"/>
        <end position="664"/>
    </location>
</feature>
<feature type="active site" description="N6-AMP-lysine intermediate" evidence="1">
    <location>
        <position position="122"/>
    </location>
</feature>
<feature type="binding site" evidence="1">
    <location>
        <begin position="32"/>
        <end position="36"/>
    </location>
    <ligand>
        <name>NAD(+)</name>
        <dbReference type="ChEBI" id="CHEBI:57540"/>
    </ligand>
</feature>
<feature type="binding site" evidence="1">
    <location>
        <begin position="80"/>
        <end position="81"/>
    </location>
    <ligand>
        <name>NAD(+)</name>
        <dbReference type="ChEBI" id="CHEBI:57540"/>
    </ligand>
</feature>
<feature type="binding site" evidence="1">
    <location>
        <position position="144"/>
    </location>
    <ligand>
        <name>NAD(+)</name>
        <dbReference type="ChEBI" id="CHEBI:57540"/>
    </ligand>
</feature>
<feature type="binding site" evidence="1">
    <location>
        <position position="178"/>
    </location>
    <ligand>
        <name>NAD(+)</name>
        <dbReference type="ChEBI" id="CHEBI:57540"/>
    </ligand>
</feature>
<feature type="binding site" evidence="1">
    <location>
        <position position="314"/>
    </location>
    <ligand>
        <name>NAD(+)</name>
        <dbReference type="ChEBI" id="CHEBI:57540"/>
    </ligand>
</feature>
<feature type="binding site" evidence="1">
    <location>
        <position position="407"/>
    </location>
    <ligand>
        <name>Zn(2+)</name>
        <dbReference type="ChEBI" id="CHEBI:29105"/>
    </ligand>
</feature>
<feature type="binding site" evidence="1">
    <location>
        <position position="410"/>
    </location>
    <ligand>
        <name>Zn(2+)</name>
        <dbReference type="ChEBI" id="CHEBI:29105"/>
    </ligand>
</feature>
<feature type="binding site" evidence="1">
    <location>
        <position position="423"/>
    </location>
    <ligand>
        <name>Zn(2+)</name>
        <dbReference type="ChEBI" id="CHEBI:29105"/>
    </ligand>
</feature>
<feature type="binding site" evidence="1">
    <location>
        <position position="429"/>
    </location>
    <ligand>
        <name>Zn(2+)</name>
        <dbReference type="ChEBI" id="CHEBI:29105"/>
    </ligand>
</feature>
<dbReference type="EC" id="6.5.1.2" evidence="1"/>
<dbReference type="EMBL" id="CP000728">
    <property type="protein sequence ID" value="ABS41654.1"/>
    <property type="molecule type" value="Genomic_DNA"/>
</dbReference>
<dbReference type="RefSeq" id="WP_012100999.1">
    <property type="nucleotide sequence ID" value="NC_009699.1"/>
</dbReference>
<dbReference type="SMR" id="A7GIK6"/>
<dbReference type="KEGG" id="cbf:CLI_3441"/>
<dbReference type="HOGENOM" id="CLU_007764_2_1_9"/>
<dbReference type="Proteomes" id="UP000002410">
    <property type="component" value="Chromosome"/>
</dbReference>
<dbReference type="GO" id="GO:0005829">
    <property type="term" value="C:cytosol"/>
    <property type="evidence" value="ECO:0007669"/>
    <property type="project" value="TreeGrafter"/>
</dbReference>
<dbReference type="GO" id="GO:0003677">
    <property type="term" value="F:DNA binding"/>
    <property type="evidence" value="ECO:0007669"/>
    <property type="project" value="InterPro"/>
</dbReference>
<dbReference type="GO" id="GO:0003911">
    <property type="term" value="F:DNA ligase (NAD+) activity"/>
    <property type="evidence" value="ECO:0007669"/>
    <property type="project" value="UniProtKB-UniRule"/>
</dbReference>
<dbReference type="GO" id="GO:0046872">
    <property type="term" value="F:metal ion binding"/>
    <property type="evidence" value="ECO:0007669"/>
    <property type="project" value="UniProtKB-KW"/>
</dbReference>
<dbReference type="GO" id="GO:0006281">
    <property type="term" value="P:DNA repair"/>
    <property type="evidence" value="ECO:0007669"/>
    <property type="project" value="UniProtKB-KW"/>
</dbReference>
<dbReference type="GO" id="GO:0006260">
    <property type="term" value="P:DNA replication"/>
    <property type="evidence" value="ECO:0007669"/>
    <property type="project" value="UniProtKB-KW"/>
</dbReference>
<dbReference type="CDD" id="cd17748">
    <property type="entry name" value="BRCT_DNA_ligase_like"/>
    <property type="match status" value="1"/>
</dbReference>
<dbReference type="CDD" id="cd09897">
    <property type="entry name" value="H3TH_FEN1-XPG-like"/>
    <property type="match status" value="1"/>
</dbReference>
<dbReference type="CDD" id="cd00114">
    <property type="entry name" value="LIGANc"/>
    <property type="match status" value="1"/>
</dbReference>
<dbReference type="FunFam" id="1.10.150.20:FF:000006">
    <property type="entry name" value="DNA ligase"/>
    <property type="match status" value="1"/>
</dbReference>
<dbReference type="FunFam" id="1.10.150.20:FF:000007">
    <property type="entry name" value="DNA ligase"/>
    <property type="match status" value="1"/>
</dbReference>
<dbReference type="FunFam" id="2.40.50.140:FF:000012">
    <property type="entry name" value="DNA ligase"/>
    <property type="match status" value="1"/>
</dbReference>
<dbReference type="FunFam" id="3.30.470.30:FF:000030">
    <property type="entry name" value="DNA ligase"/>
    <property type="match status" value="1"/>
</dbReference>
<dbReference type="Gene3D" id="1.10.150.20">
    <property type="entry name" value="5' to 3' exonuclease, C-terminal subdomain"/>
    <property type="match status" value="2"/>
</dbReference>
<dbReference type="Gene3D" id="3.40.50.10190">
    <property type="entry name" value="BRCT domain"/>
    <property type="match status" value="1"/>
</dbReference>
<dbReference type="Gene3D" id="3.30.470.30">
    <property type="entry name" value="DNA ligase/mRNA capping enzyme"/>
    <property type="match status" value="1"/>
</dbReference>
<dbReference type="Gene3D" id="1.10.287.610">
    <property type="entry name" value="Helix hairpin bin"/>
    <property type="match status" value="1"/>
</dbReference>
<dbReference type="Gene3D" id="2.40.50.140">
    <property type="entry name" value="Nucleic acid-binding proteins"/>
    <property type="match status" value="1"/>
</dbReference>
<dbReference type="HAMAP" id="MF_01588">
    <property type="entry name" value="DNA_ligase_A"/>
    <property type="match status" value="1"/>
</dbReference>
<dbReference type="InterPro" id="IPR001357">
    <property type="entry name" value="BRCT_dom"/>
</dbReference>
<dbReference type="InterPro" id="IPR036420">
    <property type="entry name" value="BRCT_dom_sf"/>
</dbReference>
<dbReference type="InterPro" id="IPR041663">
    <property type="entry name" value="DisA/LigA_HHH"/>
</dbReference>
<dbReference type="InterPro" id="IPR001679">
    <property type="entry name" value="DNA_ligase"/>
</dbReference>
<dbReference type="InterPro" id="IPR033136">
    <property type="entry name" value="DNA_ligase_CS"/>
</dbReference>
<dbReference type="InterPro" id="IPR013839">
    <property type="entry name" value="DNAligase_adenylation"/>
</dbReference>
<dbReference type="InterPro" id="IPR013840">
    <property type="entry name" value="DNAligase_N"/>
</dbReference>
<dbReference type="InterPro" id="IPR003583">
    <property type="entry name" value="Hlx-hairpin-Hlx_DNA-bd_motif"/>
</dbReference>
<dbReference type="InterPro" id="IPR012340">
    <property type="entry name" value="NA-bd_OB-fold"/>
</dbReference>
<dbReference type="InterPro" id="IPR004150">
    <property type="entry name" value="NAD_DNA_ligase_OB"/>
</dbReference>
<dbReference type="InterPro" id="IPR010994">
    <property type="entry name" value="RuvA_2-like"/>
</dbReference>
<dbReference type="NCBIfam" id="TIGR00575">
    <property type="entry name" value="dnlj"/>
    <property type="match status" value="1"/>
</dbReference>
<dbReference type="NCBIfam" id="NF005932">
    <property type="entry name" value="PRK07956.1"/>
    <property type="match status" value="1"/>
</dbReference>
<dbReference type="PANTHER" id="PTHR23389">
    <property type="entry name" value="CHROMOSOME TRANSMISSION FIDELITY FACTOR 18"/>
    <property type="match status" value="1"/>
</dbReference>
<dbReference type="PANTHER" id="PTHR23389:SF9">
    <property type="entry name" value="DNA LIGASE"/>
    <property type="match status" value="1"/>
</dbReference>
<dbReference type="Pfam" id="PF00533">
    <property type="entry name" value="BRCT"/>
    <property type="match status" value="1"/>
</dbReference>
<dbReference type="Pfam" id="PF01653">
    <property type="entry name" value="DNA_ligase_aden"/>
    <property type="match status" value="1"/>
</dbReference>
<dbReference type="Pfam" id="PF03120">
    <property type="entry name" value="DNA_ligase_OB"/>
    <property type="match status" value="1"/>
</dbReference>
<dbReference type="Pfam" id="PF12826">
    <property type="entry name" value="HHH_2"/>
    <property type="match status" value="1"/>
</dbReference>
<dbReference type="Pfam" id="PF14520">
    <property type="entry name" value="HHH_5"/>
    <property type="match status" value="1"/>
</dbReference>
<dbReference type="PIRSF" id="PIRSF001604">
    <property type="entry name" value="LigA"/>
    <property type="match status" value="1"/>
</dbReference>
<dbReference type="SMART" id="SM00292">
    <property type="entry name" value="BRCT"/>
    <property type="match status" value="1"/>
</dbReference>
<dbReference type="SMART" id="SM00278">
    <property type="entry name" value="HhH1"/>
    <property type="match status" value="4"/>
</dbReference>
<dbReference type="SMART" id="SM00532">
    <property type="entry name" value="LIGANc"/>
    <property type="match status" value="1"/>
</dbReference>
<dbReference type="SUPFAM" id="SSF52113">
    <property type="entry name" value="BRCT domain"/>
    <property type="match status" value="1"/>
</dbReference>
<dbReference type="SUPFAM" id="SSF56091">
    <property type="entry name" value="DNA ligase/mRNA capping enzyme, catalytic domain"/>
    <property type="match status" value="1"/>
</dbReference>
<dbReference type="SUPFAM" id="SSF50249">
    <property type="entry name" value="Nucleic acid-binding proteins"/>
    <property type="match status" value="1"/>
</dbReference>
<dbReference type="SUPFAM" id="SSF47781">
    <property type="entry name" value="RuvA domain 2-like"/>
    <property type="match status" value="1"/>
</dbReference>
<dbReference type="PROSITE" id="PS50172">
    <property type="entry name" value="BRCT"/>
    <property type="match status" value="1"/>
</dbReference>
<dbReference type="PROSITE" id="PS01056">
    <property type="entry name" value="DNA_LIGASE_N2"/>
    <property type="match status" value="1"/>
</dbReference>
<evidence type="ECO:0000255" key="1">
    <source>
        <dbReference type="HAMAP-Rule" id="MF_01588"/>
    </source>
</evidence>
<sequence length="664" mass="75889">MDNKLEKMKELVEELNQYAYEYYVLDNPSISDKEYDLKYDELVILEKKTEVTLPYSPTQRVGDKILGEFSKYTHKGRLWSLDKAQNMEQLIEWHNRNLKVIEQYNSMSEDKLPELRYIVTKKFDGLTVNCTYDENGILIKSATRGTGIIGEDITAQIKTIKTVPLKIKNSYVIEVHGEAIMTKTAFEEYNKAAQVPLKNLRNGAAGALRNLDIKETARRNLSAFFYDVGYNEGPEFKSYREMMNFIRNMGLPQDKYIKECTNMEEVEKEIEYIESIRGELDYDIDGAVIVVDDIKTREILGYTIKFPKWAIAYKFEAKEITTKLLDVEWNVGRSGRVTPTALLEPVELGGVTVKRATLNNMDDIKRKNVKLGAKVLVRRSNDVIPEIMGVVEESLEESEEIQAPDRCPYCNSHLVQNGVHYYCENTLSCKPQMVKSIVHFASREAMNIAGFSEKTAEQLFEKLDIKSIADLYKIKKEELLTLEKFKDKKSQNLIDAIQNSKNCDLASFIYALGIPNVGKKTANDLVMKFKTLESIKNTTIEQLVEVPDVGEIVAKSIYDFFEDEKIISNIEELLNLGVKPYYEEERIDENPFMDKTIVVTGSLNNYSRGEIKDKLQSLGAKVSSSVSKNTDYVLVGEKPGSKYEKAIELGVKVINEEEFSNKIK</sequence>
<reference key="1">
    <citation type="submission" date="2007-06" db="EMBL/GenBank/DDBJ databases">
        <authorList>
            <person name="Brinkac L.M."/>
            <person name="Daugherty S."/>
            <person name="Dodson R.J."/>
            <person name="Madupu R."/>
            <person name="Brown J.L."/>
            <person name="Bruce D."/>
            <person name="Detter C."/>
            <person name="Munk C."/>
            <person name="Smith L.A."/>
            <person name="Smith T.J."/>
            <person name="White O."/>
            <person name="Brettin T.S."/>
        </authorList>
    </citation>
    <scope>NUCLEOTIDE SEQUENCE [LARGE SCALE GENOMIC DNA]</scope>
    <source>
        <strain>Langeland / NCTC 10281 / Type F</strain>
    </source>
</reference>
<proteinExistence type="inferred from homology"/>